<gene>
    <name type="primary">mppA2</name>
    <name type="synonym">pmpca</name>
    <name type="ORF">DDB_G0290997</name>
</gene>
<feature type="transit peptide" description="Mitochondrion" evidence="3">
    <location>
        <begin position="1"/>
        <end position="13"/>
    </location>
</feature>
<feature type="chain" id="PRO_0000337763" description="Mitochondrial-processing peptidase subunit alpha-2">
    <location>
        <begin position="14"/>
        <end position="445"/>
    </location>
</feature>
<accession>Q54F93</accession>
<name>MPPA2_DICDI</name>
<protein>
    <recommendedName>
        <fullName>Mitochondrial-processing peptidase subunit alpha-2</fullName>
    </recommendedName>
    <alternativeName>
        <fullName>Alpha-MPP 2</fullName>
        <shortName>Ddalpha-MPP 2</shortName>
    </alternativeName>
    <alternativeName>
        <fullName evidence="4">Inactive zinc metalloprotease alpha-2</fullName>
    </alternativeName>
</protein>
<proteinExistence type="evidence at protein level"/>
<dbReference type="EMBL" id="AAFI02000174">
    <property type="protein sequence ID" value="EAL61929.1"/>
    <property type="molecule type" value="Genomic_DNA"/>
</dbReference>
<dbReference type="RefSeq" id="XP_635444.1">
    <property type="nucleotide sequence ID" value="XM_630352.1"/>
</dbReference>
<dbReference type="SMR" id="Q54F93"/>
<dbReference type="FunCoup" id="Q54F93">
    <property type="interactions" value="98"/>
</dbReference>
<dbReference type="STRING" id="44689.Q54F93"/>
<dbReference type="PaxDb" id="44689-DDB0237967"/>
<dbReference type="EnsemblProtists" id="EAL61929">
    <property type="protein sequence ID" value="EAL61929"/>
    <property type="gene ID" value="DDB_G0290997"/>
</dbReference>
<dbReference type="GeneID" id="8627944"/>
<dbReference type="KEGG" id="ddi:DDB_G0290997"/>
<dbReference type="dictyBase" id="DDB_G0290997">
    <property type="gene designation" value="mppA2"/>
</dbReference>
<dbReference type="VEuPathDB" id="AmoebaDB:DDB_G0290997"/>
<dbReference type="eggNOG" id="KOG2067">
    <property type="taxonomic scope" value="Eukaryota"/>
</dbReference>
<dbReference type="HOGENOM" id="CLU_009902_0_0_1"/>
<dbReference type="InParanoid" id="Q54F93"/>
<dbReference type="OMA" id="APKFALY"/>
<dbReference type="PhylomeDB" id="Q54F93"/>
<dbReference type="Reactome" id="R-DDI-611105">
    <property type="pathway name" value="Respiratory electron transport"/>
</dbReference>
<dbReference type="Reactome" id="R-DDI-9837999">
    <property type="pathway name" value="Mitochondrial protein degradation"/>
</dbReference>
<dbReference type="PRO" id="PR:Q54F93"/>
<dbReference type="Proteomes" id="UP000002195">
    <property type="component" value="Chromosome 5"/>
</dbReference>
<dbReference type="GO" id="GO:0005759">
    <property type="term" value="C:mitochondrial matrix"/>
    <property type="evidence" value="ECO:0007669"/>
    <property type="project" value="UniProtKB-SubCell"/>
</dbReference>
<dbReference type="GO" id="GO:0005739">
    <property type="term" value="C:mitochondrion"/>
    <property type="evidence" value="ECO:0000318"/>
    <property type="project" value="GO_Central"/>
</dbReference>
<dbReference type="GO" id="GO:0045335">
    <property type="term" value="C:phagocytic vesicle"/>
    <property type="evidence" value="ECO:0007005"/>
    <property type="project" value="dictyBase"/>
</dbReference>
<dbReference type="GO" id="GO:0046872">
    <property type="term" value="F:metal ion binding"/>
    <property type="evidence" value="ECO:0007669"/>
    <property type="project" value="InterPro"/>
</dbReference>
<dbReference type="GO" id="GO:0006627">
    <property type="term" value="P:protein processing involved in protein targeting to mitochondrion"/>
    <property type="evidence" value="ECO:0000318"/>
    <property type="project" value="GO_Central"/>
</dbReference>
<dbReference type="GO" id="GO:0009617">
    <property type="term" value="P:response to bacterium"/>
    <property type="evidence" value="ECO:0007007"/>
    <property type="project" value="dictyBase"/>
</dbReference>
<dbReference type="FunFam" id="3.30.830.10:FF:000021">
    <property type="entry name" value="Cytochrome b-c1 complex subunit 2"/>
    <property type="match status" value="1"/>
</dbReference>
<dbReference type="FunFam" id="3.30.830.10:FF:000039">
    <property type="entry name" value="Ubiquinol-cytochrome c reductase core subunit 2"/>
    <property type="match status" value="1"/>
</dbReference>
<dbReference type="Gene3D" id="3.30.830.10">
    <property type="entry name" value="Metalloenzyme, LuxS/M16 peptidase-like"/>
    <property type="match status" value="2"/>
</dbReference>
<dbReference type="InterPro" id="IPR011249">
    <property type="entry name" value="Metalloenz_LuxS/M16"/>
</dbReference>
<dbReference type="InterPro" id="IPR050361">
    <property type="entry name" value="MPP/UQCRC_Complex"/>
</dbReference>
<dbReference type="InterPro" id="IPR011765">
    <property type="entry name" value="Pept_M16_N"/>
</dbReference>
<dbReference type="InterPro" id="IPR007863">
    <property type="entry name" value="Peptidase_M16_C"/>
</dbReference>
<dbReference type="PANTHER" id="PTHR11851">
    <property type="entry name" value="METALLOPROTEASE"/>
    <property type="match status" value="1"/>
</dbReference>
<dbReference type="PANTHER" id="PTHR11851:SF49">
    <property type="entry name" value="MITOCHONDRIAL-PROCESSING PEPTIDASE SUBUNIT ALPHA"/>
    <property type="match status" value="1"/>
</dbReference>
<dbReference type="Pfam" id="PF00675">
    <property type="entry name" value="Peptidase_M16"/>
    <property type="match status" value="1"/>
</dbReference>
<dbReference type="Pfam" id="PF05193">
    <property type="entry name" value="Peptidase_M16_C"/>
    <property type="match status" value="1"/>
</dbReference>
<dbReference type="SUPFAM" id="SSF63411">
    <property type="entry name" value="LuxS/MPP-like metallohydrolase"/>
    <property type="match status" value="2"/>
</dbReference>
<comment type="function">
    <text evidence="2">Substrate recognition and binding subunit of the essential mitochondrial processing protease (MPP), which cleaves the mitochondrial sequence off newly imported precursors proteins.</text>
</comment>
<comment type="subunit">
    <text evidence="1">Heterodimer of alpha and beta subunits, forming the mitochondrial processing protease (MPP) in which subunit alpha is involved in substrate recognition and binding and subunit beta is the catalytic subunit.</text>
</comment>
<comment type="subcellular location">
    <subcellularLocation>
        <location evidence="2">Mitochondrion matrix</location>
    </subcellularLocation>
</comment>
<comment type="similarity">
    <text evidence="4">Belongs to the peptidase M16 family.</text>
</comment>
<organism>
    <name type="scientific">Dictyostelium discoideum</name>
    <name type="common">Social amoeba</name>
    <dbReference type="NCBI Taxonomy" id="44689"/>
    <lineage>
        <taxon>Eukaryota</taxon>
        <taxon>Amoebozoa</taxon>
        <taxon>Evosea</taxon>
        <taxon>Eumycetozoa</taxon>
        <taxon>Dictyostelia</taxon>
        <taxon>Dictyosteliales</taxon>
        <taxon>Dictyosteliaceae</taxon>
        <taxon>Dictyostelium</taxon>
    </lineage>
</organism>
<reference key="1">
    <citation type="journal article" date="2005" name="Nature">
        <title>The genome of the social amoeba Dictyostelium discoideum.</title>
        <authorList>
            <person name="Eichinger L."/>
            <person name="Pachebat J.A."/>
            <person name="Gloeckner G."/>
            <person name="Rajandream M.A."/>
            <person name="Sucgang R."/>
            <person name="Berriman M."/>
            <person name="Song J."/>
            <person name="Olsen R."/>
            <person name="Szafranski K."/>
            <person name="Xu Q."/>
            <person name="Tunggal B."/>
            <person name="Kummerfeld S."/>
            <person name="Madera M."/>
            <person name="Konfortov B.A."/>
            <person name="Rivero F."/>
            <person name="Bankier A.T."/>
            <person name="Lehmann R."/>
            <person name="Hamlin N."/>
            <person name="Davies R."/>
            <person name="Gaudet P."/>
            <person name="Fey P."/>
            <person name="Pilcher K."/>
            <person name="Chen G."/>
            <person name="Saunders D."/>
            <person name="Sodergren E.J."/>
            <person name="Davis P."/>
            <person name="Kerhornou A."/>
            <person name="Nie X."/>
            <person name="Hall N."/>
            <person name="Anjard C."/>
            <person name="Hemphill L."/>
            <person name="Bason N."/>
            <person name="Farbrother P."/>
            <person name="Desany B."/>
            <person name="Just E."/>
            <person name="Morio T."/>
            <person name="Rost R."/>
            <person name="Churcher C.M."/>
            <person name="Cooper J."/>
            <person name="Haydock S."/>
            <person name="van Driessche N."/>
            <person name="Cronin A."/>
            <person name="Goodhead I."/>
            <person name="Muzny D.M."/>
            <person name="Mourier T."/>
            <person name="Pain A."/>
            <person name="Lu M."/>
            <person name="Harper D."/>
            <person name="Lindsay R."/>
            <person name="Hauser H."/>
            <person name="James K.D."/>
            <person name="Quiles M."/>
            <person name="Madan Babu M."/>
            <person name="Saito T."/>
            <person name="Buchrieser C."/>
            <person name="Wardroper A."/>
            <person name="Felder M."/>
            <person name="Thangavelu M."/>
            <person name="Johnson D."/>
            <person name="Knights A."/>
            <person name="Loulseged H."/>
            <person name="Mungall K.L."/>
            <person name="Oliver K."/>
            <person name="Price C."/>
            <person name="Quail M.A."/>
            <person name="Urushihara H."/>
            <person name="Hernandez J."/>
            <person name="Rabbinowitsch E."/>
            <person name="Steffen D."/>
            <person name="Sanders M."/>
            <person name="Ma J."/>
            <person name="Kohara Y."/>
            <person name="Sharp S."/>
            <person name="Simmonds M.N."/>
            <person name="Spiegler S."/>
            <person name="Tivey A."/>
            <person name="Sugano S."/>
            <person name="White B."/>
            <person name="Walker D."/>
            <person name="Woodward J.R."/>
            <person name="Winckler T."/>
            <person name="Tanaka Y."/>
            <person name="Shaulsky G."/>
            <person name="Schleicher M."/>
            <person name="Weinstock G.M."/>
            <person name="Rosenthal A."/>
            <person name="Cox E.C."/>
            <person name="Chisholm R.L."/>
            <person name="Gibbs R.A."/>
            <person name="Loomis W.F."/>
            <person name="Platzer M."/>
            <person name="Kay R.R."/>
            <person name="Williams J.G."/>
            <person name="Dear P.H."/>
            <person name="Noegel A.A."/>
            <person name="Barrell B.G."/>
            <person name="Kuspa A."/>
        </authorList>
    </citation>
    <scope>NUCLEOTIDE SEQUENCE [LARGE SCALE GENOMIC DNA]</scope>
    <source>
        <strain>AX4</strain>
    </source>
</reference>
<reference key="2">
    <citation type="journal article" date="2006" name="Mol. Cell. Proteomics">
        <title>Proteomics fingerprinting of phagosome maturation and evidence for the role of a Galpha during uptake.</title>
        <authorList>
            <person name="Gotthardt D."/>
            <person name="Blancheteau V."/>
            <person name="Bosserhoff A."/>
            <person name="Ruppert T."/>
            <person name="Delorenzi M."/>
            <person name="Soldati T."/>
        </authorList>
    </citation>
    <scope>IDENTIFICATION BY MASS SPECTROMETRY [LARGE SCALE ANALYSIS]</scope>
    <source>
        <strain>AX2</strain>
    </source>
</reference>
<evidence type="ECO:0000250" key="1">
    <source>
        <dbReference type="UniProtKB" id="P10507"/>
    </source>
</evidence>
<evidence type="ECO:0000250" key="2">
    <source>
        <dbReference type="UniProtKB" id="Q86A84"/>
    </source>
</evidence>
<evidence type="ECO:0000255" key="3"/>
<evidence type="ECO:0000305" key="4"/>
<keyword id="KW-0496">Mitochondrion</keyword>
<keyword id="KW-1185">Reference proteome</keyword>
<keyword id="KW-0809">Transit peptide</keyword>
<sequence>MIGRFIARNYTTSIFQESKRIVESTTLSNGLKVVSLVGGYTGPAVSLGLYIKTGSRNETQETAGLNQVLKGLAFESNTNKLGIEVQRDIEVSGSTAFAQASRDNLLIALQTLPNRSLQMLNNLANITKPTLPYHEVRDVTEIIVKESEAYNHDSYSSIFESVHQTAFRGKTLGRPLVAPICNLGNITKDAVTNWVNSTYKPSNMILVGVGLSHNELIEEAEKVTFGNDESSTSISNETAQYIGGESLKYSSGNSKVVLAFEGTAQSNIKDVAAFSVLQSILGNGCPKTAPGHGRTSRLFSLTKNNSNIVNSEAFNLTYGDSGLFGVVAEVEGATVGKTVSLITSEIVAASKTAGQELERAKAVTKSSVLEQAESRTSALEFIGKQAIYTDKVLTPAEFAEEISKVTSEDIKRVAKKMTSKKPTLVVVGDVSDAPTIESVQSQLKL</sequence>